<dbReference type="EMBL" id="CP001103">
    <property type="protein sequence ID" value="AEA97971.1"/>
    <property type="molecule type" value="Genomic_DNA"/>
</dbReference>
<dbReference type="RefSeq" id="WP_012518302.1">
    <property type="nucleotide sequence ID" value="NC_011138.3"/>
</dbReference>
<dbReference type="SMR" id="B4RXY7"/>
<dbReference type="GeneID" id="56342270"/>
<dbReference type="KEGG" id="amc:MADE_1009165"/>
<dbReference type="HOGENOM" id="CLU_108953_3_0_6"/>
<dbReference type="Proteomes" id="UP000001870">
    <property type="component" value="Chromosome"/>
</dbReference>
<dbReference type="GO" id="GO:0005829">
    <property type="term" value="C:cytosol"/>
    <property type="evidence" value="ECO:0007669"/>
    <property type="project" value="TreeGrafter"/>
</dbReference>
<dbReference type="GO" id="GO:0003723">
    <property type="term" value="F:RNA binding"/>
    <property type="evidence" value="ECO:0007669"/>
    <property type="project" value="UniProtKB-UniRule"/>
</dbReference>
<dbReference type="GO" id="GO:0070929">
    <property type="term" value="P:trans-translation"/>
    <property type="evidence" value="ECO:0007669"/>
    <property type="project" value="UniProtKB-UniRule"/>
</dbReference>
<dbReference type="CDD" id="cd09294">
    <property type="entry name" value="SmpB"/>
    <property type="match status" value="1"/>
</dbReference>
<dbReference type="Gene3D" id="2.40.280.10">
    <property type="match status" value="1"/>
</dbReference>
<dbReference type="HAMAP" id="MF_00023">
    <property type="entry name" value="SmpB"/>
    <property type="match status" value="1"/>
</dbReference>
<dbReference type="InterPro" id="IPR023620">
    <property type="entry name" value="SmpB"/>
</dbReference>
<dbReference type="InterPro" id="IPR000037">
    <property type="entry name" value="SsrA-bd_prot"/>
</dbReference>
<dbReference type="InterPro" id="IPR020081">
    <property type="entry name" value="SsrA-bd_prot_CS"/>
</dbReference>
<dbReference type="NCBIfam" id="NF003843">
    <property type="entry name" value="PRK05422.1"/>
    <property type="match status" value="1"/>
</dbReference>
<dbReference type="NCBIfam" id="TIGR00086">
    <property type="entry name" value="smpB"/>
    <property type="match status" value="1"/>
</dbReference>
<dbReference type="PANTHER" id="PTHR30308:SF2">
    <property type="entry name" value="SSRA-BINDING PROTEIN"/>
    <property type="match status" value="1"/>
</dbReference>
<dbReference type="PANTHER" id="PTHR30308">
    <property type="entry name" value="TMRNA-BINDING COMPONENT OF TRANS-TRANSLATION TAGGING COMPLEX"/>
    <property type="match status" value="1"/>
</dbReference>
<dbReference type="Pfam" id="PF01668">
    <property type="entry name" value="SmpB"/>
    <property type="match status" value="1"/>
</dbReference>
<dbReference type="SUPFAM" id="SSF74982">
    <property type="entry name" value="Small protein B (SmpB)"/>
    <property type="match status" value="1"/>
</dbReference>
<dbReference type="PROSITE" id="PS01317">
    <property type="entry name" value="SSRP"/>
    <property type="match status" value="1"/>
</dbReference>
<accession>B4RXY7</accession>
<accession>F2GB65</accession>
<name>SSRP_ALTMD</name>
<feature type="chain" id="PRO_1000116410" description="SsrA-binding protein">
    <location>
        <begin position="1"/>
        <end position="159"/>
    </location>
</feature>
<feature type="region of interest" description="Disordered" evidence="2">
    <location>
        <begin position="138"/>
        <end position="159"/>
    </location>
</feature>
<gene>
    <name evidence="1" type="primary">smpB</name>
    <name type="ordered locus">MADE_1009165</name>
</gene>
<keyword id="KW-0963">Cytoplasm</keyword>
<keyword id="KW-0694">RNA-binding</keyword>
<organism>
    <name type="scientific">Alteromonas mediterranea (strain DSM 17117 / CIP 110805 / LMG 28347 / Deep ecotype)</name>
    <dbReference type="NCBI Taxonomy" id="1774373"/>
    <lineage>
        <taxon>Bacteria</taxon>
        <taxon>Pseudomonadati</taxon>
        <taxon>Pseudomonadota</taxon>
        <taxon>Gammaproteobacteria</taxon>
        <taxon>Alteromonadales</taxon>
        <taxon>Alteromonadaceae</taxon>
        <taxon>Alteromonas/Salinimonas group</taxon>
        <taxon>Alteromonas</taxon>
    </lineage>
</organism>
<comment type="function">
    <text evidence="1">Required for rescue of stalled ribosomes mediated by trans-translation. Binds to transfer-messenger RNA (tmRNA), required for stable association of tmRNA with ribosomes. tmRNA and SmpB together mimic tRNA shape, replacing the anticodon stem-loop with SmpB. tmRNA is encoded by the ssrA gene; the 2 termini fold to resemble tRNA(Ala) and it encodes a 'tag peptide', a short internal open reading frame. During trans-translation Ala-aminoacylated tmRNA acts like a tRNA, entering the A-site of stalled ribosomes, displacing the stalled mRNA. The ribosome then switches to translate the ORF on the tmRNA; the nascent peptide is terminated with the 'tag peptide' encoded by the tmRNA and targeted for degradation. The ribosome is freed to recommence translation, which seems to be the essential function of trans-translation.</text>
</comment>
<comment type="subcellular location">
    <subcellularLocation>
        <location evidence="1">Cytoplasm</location>
    </subcellularLocation>
    <text evidence="1">The tmRNA-SmpB complex associates with stalled 70S ribosomes.</text>
</comment>
<comment type="similarity">
    <text evidence="1">Belongs to the SmpB family.</text>
</comment>
<sequence>MKKNKANKNTSGNIAQNKKARHDYFLEDKFEAGLELQGWEIKSIRAGKVNITDAYIIIQNAEAYLVGCRISPLNQASTHVVAAPERARKLLLKKREIDRLMGARDRQGYSIVATSMYWKKCWVKLEIHLAKGKHAHDKRDTLKDKDWQRQKERMMKHSV</sequence>
<evidence type="ECO:0000255" key="1">
    <source>
        <dbReference type="HAMAP-Rule" id="MF_00023"/>
    </source>
</evidence>
<evidence type="ECO:0000256" key="2">
    <source>
        <dbReference type="SAM" id="MobiDB-lite"/>
    </source>
</evidence>
<protein>
    <recommendedName>
        <fullName evidence="1">SsrA-binding protein</fullName>
    </recommendedName>
    <alternativeName>
        <fullName evidence="1">Small protein B</fullName>
    </alternativeName>
</protein>
<proteinExistence type="inferred from homology"/>
<reference key="1">
    <citation type="journal article" date="2008" name="ISME J.">
        <title>Comparative genomics of two ecotypes of the marine planktonic copiotroph Alteromonas macleodii suggests alternative lifestyles associated with different kinds of particulate organic matter.</title>
        <authorList>
            <person name="Ivars-Martinez E."/>
            <person name="Martin-Cuadrado A.-B."/>
            <person name="D'Auria G."/>
            <person name="Mira A."/>
            <person name="Ferriera S."/>
            <person name="Johnson J."/>
            <person name="Friedman R."/>
            <person name="Rodriguez-Valera F."/>
        </authorList>
    </citation>
    <scope>NUCLEOTIDE SEQUENCE [LARGE SCALE GENOMIC DNA]</scope>
    <source>
        <strain>DSM 17117 / CIP 110805 / LMG 28347 / Deep ecotype</strain>
    </source>
</reference>